<feature type="chain" id="PRO_1000013422" description="Large ribosomal subunit protein bL34">
    <location>
        <begin position="1"/>
        <end position="44"/>
    </location>
</feature>
<dbReference type="EMBL" id="CP000463">
    <property type="protein sequence ID" value="ABJ04600.1"/>
    <property type="molecule type" value="Genomic_DNA"/>
</dbReference>
<dbReference type="SMR" id="Q07TY4"/>
<dbReference type="STRING" id="316055.RPE_0642"/>
<dbReference type="KEGG" id="rpe:RPE_0642"/>
<dbReference type="eggNOG" id="COG0230">
    <property type="taxonomic scope" value="Bacteria"/>
</dbReference>
<dbReference type="HOGENOM" id="CLU_129938_2_0_5"/>
<dbReference type="GO" id="GO:1990904">
    <property type="term" value="C:ribonucleoprotein complex"/>
    <property type="evidence" value="ECO:0007669"/>
    <property type="project" value="UniProtKB-KW"/>
</dbReference>
<dbReference type="GO" id="GO:0005840">
    <property type="term" value="C:ribosome"/>
    <property type="evidence" value="ECO:0007669"/>
    <property type="project" value="UniProtKB-KW"/>
</dbReference>
<dbReference type="GO" id="GO:0003735">
    <property type="term" value="F:structural constituent of ribosome"/>
    <property type="evidence" value="ECO:0007669"/>
    <property type="project" value="InterPro"/>
</dbReference>
<dbReference type="GO" id="GO:0006412">
    <property type="term" value="P:translation"/>
    <property type="evidence" value="ECO:0007669"/>
    <property type="project" value="UniProtKB-UniRule"/>
</dbReference>
<dbReference type="FunFam" id="1.10.287.3980:FF:000001">
    <property type="entry name" value="Mitochondrial ribosomal protein L34"/>
    <property type="match status" value="1"/>
</dbReference>
<dbReference type="Gene3D" id="1.10.287.3980">
    <property type="match status" value="1"/>
</dbReference>
<dbReference type="HAMAP" id="MF_00391">
    <property type="entry name" value="Ribosomal_bL34"/>
    <property type="match status" value="1"/>
</dbReference>
<dbReference type="InterPro" id="IPR000271">
    <property type="entry name" value="Ribosomal_bL34"/>
</dbReference>
<dbReference type="InterPro" id="IPR020939">
    <property type="entry name" value="Ribosomal_bL34_CS"/>
</dbReference>
<dbReference type="NCBIfam" id="TIGR01030">
    <property type="entry name" value="rpmH_bact"/>
    <property type="match status" value="1"/>
</dbReference>
<dbReference type="PANTHER" id="PTHR14503:SF4">
    <property type="entry name" value="LARGE RIBOSOMAL SUBUNIT PROTEIN BL34M"/>
    <property type="match status" value="1"/>
</dbReference>
<dbReference type="PANTHER" id="PTHR14503">
    <property type="entry name" value="MITOCHONDRIAL RIBOSOMAL PROTEIN 34 FAMILY MEMBER"/>
    <property type="match status" value="1"/>
</dbReference>
<dbReference type="Pfam" id="PF00468">
    <property type="entry name" value="Ribosomal_L34"/>
    <property type="match status" value="1"/>
</dbReference>
<dbReference type="PROSITE" id="PS00784">
    <property type="entry name" value="RIBOSOMAL_L34"/>
    <property type="match status" value="1"/>
</dbReference>
<comment type="similarity">
    <text evidence="1">Belongs to the bacterial ribosomal protein bL34 family.</text>
</comment>
<organism>
    <name type="scientific">Rhodopseudomonas palustris (strain BisA53)</name>
    <dbReference type="NCBI Taxonomy" id="316055"/>
    <lineage>
        <taxon>Bacteria</taxon>
        <taxon>Pseudomonadati</taxon>
        <taxon>Pseudomonadota</taxon>
        <taxon>Alphaproteobacteria</taxon>
        <taxon>Hyphomicrobiales</taxon>
        <taxon>Nitrobacteraceae</taxon>
        <taxon>Rhodopseudomonas</taxon>
    </lineage>
</organism>
<reference key="1">
    <citation type="submission" date="2006-09" db="EMBL/GenBank/DDBJ databases">
        <title>Complete sequence of Rhodopseudomonas palustris BisA53.</title>
        <authorList>
            <consortium name="US DOE Joint Genome Institute"/>
            <person name="Copeland A."/>
            <person name="Lucas S."/>
            <person name="Lapidus A."/>
            <person name="Barry K."/>
            <person name="Detter J.C."/>
            <person name="Glavina del Rio T."/>
            <person name="Hammon N."/>
            <person name="Israni S."/>
            <person name="Dalin E."/>
            <person name="Tice H."/>
            <person name="Pitluck S."/>
            <person name="Chain P."/>
            <person name="Malfatti S."/>
            <person name="Shin M."/>
            <person name="Vergez L."/>
            <person name="Schmutz J."/>
            <person name="Larimer F."/>
            <person name="Land M."/>
            <person name="Hauser L."/>
            <person name="Pelletier D.A."/>
            <person name="Kyrpides N."/>
            <person name="Kim E."/>
            <person name="Harwood C.S."/>
            <person name="Oda Y."/>
            <person name="Richardson P."/>
        </authorList>
    </citation>
    <scope>NUCLEOTIDE SEQUENCE [LARGE SCALE GENOMIC DNA]</scope>
    <source>
        <strain>BisA53</strain>
    </source>
</reference>
<accession>Q07TY4</accession>
<keyword id="KW-0687">Ribonucleoprotein</keyword>
<keyword id="KW-0689">Ribosomal protein</keyword>
<protein>
    <recommendedName>
        <fullName evidence="1">Large ribosomal subunit protein bL34</fullName>
    </recommendedName>
    <alternativeName>
        <fullName evidence="2">50S ribosomal protein L34</fullName>
    </alternativeName>
</protein>
<name>RL34_RHOP5</name>
<gene>
    <name evidence="1" type="primary">rpmH</name>
    <name type="ordered locus">RPE_0642</name>
</gene>
<evidence type="ECO:0000255" key="1">
    <source>
        <dbReference type="HAMAP-Rule" id="MF_00391"/>
    </source>
</evidence>
<evidence type="ECO:0000305" key="2"/>
<sequence>MKRTYQPSKLVRKRRHGFRARLATVGGRKVLAARRARGRKRLSA</sequence>
<proteinExistence type="inferred from homology"/>